<reference key="1">
    <citation type="journal article" date="2006" name="Nat. Biotechnol.">
        <title>Genome sequence of the bioplastic-producing 'Knallgas' bacterium Ralstonia eutropha H16.</title>
        <authorList>
            <person name="Pohlmann A."/>
            <person name="Fricke W.F."/>
            <person name="Reinecke F."/>
            <person name="Kusian B."/>
            <person name="Liesegang H."/>
            <person name="Cramm R."/>
            <person name="Eitinger T."/>
            <person name="Ewering C."/>
            <person name="Poetter M."/>
            <person name="Schwartz E."/>
            <person name="Strittmatter A."/>
            <person name="Voss I."/>
            <person name="Gottschalk G."/>
            <person name="Steinbuechel A."/>
            <person name="Friedrich B."/>
            <person name="Bowien B."/>
        </authorList>
    </citation>
    <scope>NUCLEOTIDE SEQUENCE [LARGE SCALE GENOMIC DNA]</scope>
    <source>
        <strain>ATCC 17699 / DSM 428 / KCTC 22496 / NCIMB 10442 / H16 / Stanier 337</strain>
    </source>
</reference>
<feature type="chain" id="PRO_1000054125" description="Cyclic pyranopterin monophosphate synthase">
    <location>
        <begin position="1"/>
        <end position="159"/>
    </location>
</feature>
<feature type="active site" evidence="1">
    <location>
        <position position="128"/>
    </location>
</feature>
<feature type="binding site" evidence="1">
    <location>
        <begin position="75"/>
        <end position="77"/>
    </location>
    <ligand>
        <name>substrate</name>
    </ligand>
</feature>
<feature type="binding site" evidence="1">
    <location>
        <begin position="113"/>
        <end position="114"/>
    </location>
    <ligand>
        <name>substrate</name>
    </ligand>
</feature>
<sequence>MTQLTHFDTAGQAHMVDVGDKASTHRVAVATGTITMQPATFTLVRDGSAKKGDVIGIARVAAIMATKRTADLIPLCHPIGLTKVAVEFALDEATATVACTVRTETRGQTGVEMEALTGVQVALLTIYDMCKAVDRGMVIGNVKLLEKHGGKSGDWVAAG</sequence>
<organism>
    <name type="scientific">Cupriavidus necator (strain ATCC 17699 / DSM 428 / KCTC 22496 / NCIMB 10442 / H16 / Stanier 337)</name>
    <name type="common">Ralstonia eutropha</name>
    <dbReference type="NCBI Taxonomy" id="381666"/>
    <lineage>
        <taxon>Bacteria</taxon>
        <taxon>Pseudomonadati</taxon>
        <taxon>Pseudomonadota</taxon>
        <taxon>Betaproteobacteria</taxon>
        <taxon>Burkholderiales</taxon>
        <taxon>Burkholderiaceae</taxon>
        <taxon>Cupriavidus</taxon>
    </lineage>
</organism>
<evidence type="ECO:0000255" key="1">
    <source>
        <dbReference type="HAMAP-Rule" id="MF_01224"/>
    </source>
</evidence>
<gene>
    <name evidence="1" type="primary">moaC</name>
    <name type="ordered locus">H16_A0554</name>
</gene>
<name>MOAC_CUPNH</name>
<dbReference type="EC" id="4.6.1.17" evidence="1"/>
<dbReference type="EMBL" id="AM260479">
    <property type="protein sequence ID" value="CAJ91703.1"/>
    <property type="molecule type" value="Genomic_DNA"/>
</dbReference>
<dbReference type="RefSeq" id="WP_011614574.1">
    <property type="nucleotide sequence ID" value="NC_008313.1"/>
</dbReference>
<dbReference type="SMR" id="Q0KE68"/>
<dbReference type="STRING" id="381666.H16_A0554"/>
<dbReference type="KEGG" id="reh:H16_A0554"/>
<dbReference type="PATRIC" id="fig|381666.6.peg.919"/>
<dbReference type="eggNOG" id="COG0315">
    <property type="taxonomic scope" value="Bacteria"/>
</dbReference>
<dbReference type="HOGENOM" id="CLU_074693_1_1_4"/>
<dbReference type="OrthoDB" id="9794429at2"/>
<dbReference type="UniPathway" id="UPA00344"/>
<dbReference type="Proteomes" id="UP000008210">
    <property type="component" value="Chromosome 1"/>
</dbReference>
<dbReference type="GO" id="GO:0061799">
    <property type="term" value="F:cyclic pyranopterin monophosphate synthase activity"/>
    <property type="evidence" value="ECO:0007669"/>
    <property type="project" value="UniProtKB-UniRule"/>
</dbReference>
<dbReference type="GO" id="GO:0006777">
    <property type="term" value="P:Mo-molybdopterin cofactor biosynthetic process"/>
    <property type="evidence" value="ECO:0007669"/>
    <property type="project" value="UniProtKB-UniRule"/>
</dbReference>
<dbReference type="CDD" id="cd01420">
    <property type="entry name" value="MoaC_PE"/>
    <property type="match status" value="1"/>
</dbReference>
<dbReference type="Gene3D" id="3.30.70.640">
    <property type="entry name" value="Molybdopterin cofactor biosynthesis C (MoaC) domain"/>
    <property type="match status" value="1"/>
</dbReference>
<dbReference type="HAMAP" id="MF_01224_B">
    <property type="entry name" value="MoaC_B"/>
    <property type="match status" value="1"/>
</dbReference>
<dbReference type="InterPro" id="IPR023045">
    <property type="entry name" value="MoaC"/>
</dbReference>
<dbReference type="InterPro" id="IPR047594">
    <property type="entry name" value="MoaC_bact/euk"/>
</dbReference>
<dbReference type="InterPro" id="IPR036522">
    <property type="entry name" value="MoaC_sf"/>
</dbReference>
<dbReference type="InterPro" id="IPR050105">
    <property type="entry name" value="MoCo_biosynth_MoaA/MoaC"/>
</dbReference>
<dbReference type="InterPro" id="IPR002820">
    <property type="entry name" value="Mopterin_CF_biosynth-C_dom"/>
</dbReference>
<dbReference type="NCBIfam" id="TIGR00581">
    <property type="entry name" value="moaC"/>
    <property type="match status" value="1"/>
</dbReference>
<dbReference type="NCBIfam" id="NF006870">
    <property type="entry name" value="PRK09364.1"/>
    <property type="match status" value="1"/>
</dbReference>
<dbReference type="PANTHER" id="PTHR22960">
    <property type="entry name" value="MOLYBDOPTERIN COFACTOR SYNTHESIS PROTEIN A"/>
    <property type="match status" value="1"/>
</dbReference>
<dbReference type="Pfam" id="PF01967">
    <property type="entry name" value="MoaC"/>
    <property type="match status" value="1"/>
</dbReference>
<dbReference type="SUPFAM" id="SSF55040">
    <property type="entry name" value="Molybdenum cofactor biosynthesis protein C, MoaC"/>
    <property type="match status" value="1"/>
</dbReference>
<protein>
    <recommendedName>
        <fullName evidence="1">Cyclic pyranopterin monophosphate synthase</fullName>
        <ecNumber evidence="1">4.6.1.17</ecNumber>
    </recommendedName>
    <alternativeName>
        <fullName evidence="1">Molybdenum cofactor biosynthesis protein C</fullName>
    </alternativeName>
</protein>
<keyword id="KW-0456">Lyase</keyword>
<keyword id="KW-0501">Molybdenum cofactor biosynthesis</keyword>
<keyword id="KW-1185">Reference proteome</keyword>
<accession>Q0KE68</accession>
<proteinExistence type="inferred from homology"/>
<comment type="function">
    <text evidence="1">Catalyzes the conversion of (8S)-3',8-cyclo-7,8-dihydroguanosine 5'-triphosphate to cyclic pyranopterin monophosphate (cPMP).</text>
</comment>
<comment type="catalytic activity">
    <reaction evidence="1">
        <text>(8S)-3',8-cyclo-7,8-dihydroguanosine 5'-triphosphate = cyclic pyranopterin phosphate + diphosphate</text>
        <dbReference type="Rhea" id="RHEA:49580"/>
        <dbReference type="ChEBI" id="CHEBI:33019"/>
        <dbReference type="ChEBI" id="CHEBI:59648"/>
        <dbReference type="ChEBI" id="CHEBI:131766"/>
        <dbReference type="EC" id="4.6.1.17"/>
    </reaction>
</comment>
<comment type="pathway">
    <text evidence="1">Cofactor biosynthesis; molybdopterin biosynthesis.</text>
</comment>
<comment type="subunit">
    <text evidence="1">Homohexamer; trimer of dimers.</text>
</comment>
<comment type="similarity">
    <text evidence="1">Belongs to the MoaC family.</text>
</comment>